<protein>
    <recommendedName>
        <fullName>ATP-binding cassette sub-family C member 4</fullName>
        <ecNumber evidence="1">7.6.2.-</ecNumber>
        <ecNumber evidence="13 14">7.6.2.2</ecNumber>
        <ecNumber evidence="1">7.6.2.3</ecNumber>
    </recommendedName>
    <alternativeName>
        <fullName>Multidrug resistance-associated protein 4</fullName>
    </alternativeName>
</protein>
<accession>E9Q236</accession>
<accession>A0A1C9IC75</accession>
<accession>B7ZWC5</accession>
<accession>Q3TZN9</accession>
<keyword id="KW-0025">Alternative splicing</keyword>
<keyword id="KW-0067">ATP-binding</keyword>
<keyword id="KW-1003">Cell membrane</keyword>
<keyword id="KW-0445">Lipid transport</keyword>
<keyword id="KW-0472">Membrane</keyword>
<keyword id="KW-0547">Nucleotide-binding</keyword>
<keyword id="KW-0597">Phosphoprotein</keyword>
<keyword id="KW-1185">Reference proteome</keyword>
<keyword id="KW-1278">Translocase</keyword>
<keyword id="KW-0812">Transmembrane</keyword>
<keyword id="KW-1133">Transmembrane helix</keyword>
<keyword id="KW-0813">Transport</keyword>
<evidence type="ECO:0000250" key="1">
    <source>
        <dbReference type="UniProtKB" id="O15439"/>
    </source>
</evidence>
<evidence type="ECO:0000255" key="2"/>
<evidence type="ECO:0000255" key="3">
    <source>
        <dbReference type="PROSITE-ProRule" id="PRU00434"/>
    </source>
</evidence>
<evidence type="ECO:0000255" key="4">
    <source>
        <dbReference type="PROSITE-ProRule" id="PRU00441"/>
    </source>
</evidence>
<evidence type="ECO:0000256" key="5">
    <source>
        <dbReference type="SAM" id="MobiDB-lite"/>
    </source>
</evidence>
<evidence type="ECO:0000269" key="6">
    <source>
    </source>
</evidence>
<evidence type="ECO:0000269" key="7">
    <source>
    </source>
</evidence>
<evidence type="ECO:0000269" key="8">
    <source>
    </source>
</evidence>
<evidence type="ECO:0000269" key="9">
    <source>
    </source>
</evidence>
<evidence type="ECO:0000303" key="10">
    <source>
    </source>
</evidence>
<evidence type="ECO:0000303" key="11">
    <source>
    </source>
</evidence>
<evidence type="ECO:0000305" key="12"/>
<evidence type="ECO:0000305" key="13">
    <source>
    </source>
</evidence>
<evidence type="ECO:0000305" key="14">
    <source>
    </source>
</evidence>
<evidence type="ECO:0000312" key="15">
    <source>
        <dbReference type="MGI" id="MGI:2443111"/>
    </source>
</evidence>
<dbReference type="EC" id="7.6.2.-" evidence="1"/>
<dbReference type="EC" id="7.6.2.2" evidence="13 14"/>
<dbReference type="EC" id="7.6.2.3" evidence="1"/>
<dbReference type="EMBL" id="AK157723">
    <property type="protein sequence ID" value="BAE34169.1"/>
    <property type="molecule type" value="mRNA"/>
</dbReference>
<dbReference type="EMBL" id="KX013261">
    <property type="protein sequence ID" value="AOP00017.1"/>
    <property type="molecule type" value="mRNA"/>
</dbReference>
<dbReference type="EMBL" id="AC154419">
    <property type="status" value="NOT_ANNOTATED_CDS"/>
    <property type="molecule type" value="Genomic_DNA"/>
</dbReference>
<dbReference type="EMBL" id="AC167668">
    <property type="status" value="NOT_ANNOTATED_CDS"/>
    <property type="molecule type" value="Genomic_DNA"/>
</dbReference>
<dbReference type="EMBL" id="CT025694">
    <property type="status" value="NOT_ANNOTATED_CDS"/>
    <property type="molecule type" value="Genomic_DNA"/>
</dbReference>
<dbReference type="EMBL" id="BC171974">
    <property type="protein sequence ID" value="AAI71974.1"/>
    <property type="molecule type" value="mRNA"/>
</dbReference>
<dbReference type="CCDS" id="CCDS27335.1">
    <molecule id="E9Q236-1"/>
</dbReference>
<dbReference type="CCDS" id="CCDS49565.1">
    <molecule id="E9Q236-2"/>
</dbReference>
<dbReference type="RefSeq" id="NP_001028508.2">
    <molecule id="E9Q236-1"/>
    <property type="nucleotide sequence ID" value="NM_001033336.3"/>
</dbReference>
<dbReference type="RefSeq" id="NP_001157147.1">
    <property type="nucleotide sequence ID" value="NM_001163675.1"/>
</dbReference>
<dbReference type="RefSeq" id="NP_001157148.1">
    <molecule id="E9Q236-2"/>
    <property type="nucleotide sequence ID" value="NM_001163676.1"/>
</dbReference>
<dbReference type="SMR" id="E9Q236"/>
<dbReference type="FunCoup" id="E9Q236">
    <property type="interactions" value="453"/>
</dbReference>
<dbReference type="STRING" id="10090.ENSMUSP00000042186"/>
<dbReference type="GlyGen" id="E9Q236">
    <property type="glycosylation" value="3 sites, 1 N-linked glycan (1 site)"/>
</dbReference>
<dbReference type="iPTMnet" id="E9Q236"/>
<dbReference type="PhosphoSitePlus" id="E9Q236"/>
<dbReference type="SwissPalm" id="E9Q236"/>
<dbReference type="jPOST" id="E9Q236"/>
<dbReference type="PaxDb" id="10090-ENSMUSP00000042186"/>
<dbReference type="ProteomicsDB" id="316165"/>
<dbReference type="Antibodypedia" id="3448">
    <property type="antibodies" value="459 antibodies from 36 providers"/>
</dbReference>
<dbReference type="Ensembl" id="ENSMUST00000036554.14">
    <molecule id="E9Q236-1"/>
    <property type="protein sequence ID" value="ENSMUSP00000042186.7"/>
    <property type="gene ID" value="ENSMUSG00000032849.15"/>
</dbReference>
<dbReference type="Ensembl" id="ENSMUST00000166646.2">
    <molecule id="E9Q236-2"/>
    <property type="protein sequence ID" value="ENSMUSP00000129677.2"/>
    <property type="gene ID" value="ENSMUSG00000032849.15"/>
</dbReference>
<dbReference type="GeneID" id="239273"/>
<dbReference type="KEGG" id="mmu:239273"/>
<dbReference type="UCSC" id="uc007uyv.2">
    <molecule id="E9Q236-1"/>
    <property type="organism name" value="mouse"/>
</dbReference>
<dbReference type="AGR" id="MGI:2443111"/>
<dbReference type="CTD" id="10257"/>
<dbReference type="MGI" id="MGI:2443111">
    <property type="gene designation" value="Abcc4"/>
</dbReference>
<dbReference type="VEuPathDB" id="HostDB:ENSMUSG00000032849"/>
<dbReference type="eggNOG" id="KOG0054">
    <property type="taxonomic scope" value="Eukaryota"/>
</dbReference>
<dbReference type="GeneTree" id="ENSGT00940000153931"/>
<dbReference type="InParanoid" id="E9Q236"/>
<dbReference type="OMA" id="ACAQWFH"/>
<dbReference type="OrthoDB" id="6500128at2759"/>
<dbReference type="PhylomeDB" id="E9Q236"/>
<dbReference type="TreeFam" id="TF105202"/>
<dbReference type="Reactome" id="R-MMU-114608">
    <property type="pathway name" value="Platelet degranulation"/>
</dbReference>
<dbReference type="Reactome" id="R-MMU-382556">
    <property type="pathway name" value="ABC-family proteins mediated transport"/>
</dbReference>
<dbReference type="Reactome" id="R-MMU-9748787">
    <property type="pathway name" value="Azathioprine ADME"/>
</dbReference>
<dbReference type="Reactome" id="R-MMU-9753281">
    <property type="pathway name" value="Paracetamol ADME"/>
</dbReference>
<dbReference type="BioGRID-ORCS" id="239273">
    <property type="hits" value="2 hits in 78 CRISPR screens"/>
</dbReference>
<dbReference type="ChiTaRS" id="Abcc4">
    <property type="organism name" value="mouse"/>
</dbReference>
<dbReference type="PRO" id="PR:E9Q236"/>
<dbReference type="Proteomes" id="UP000000589">
    <property type="component" value="Chromosome 14"/>
</dbReference>
<dbReference type="RNAct" id="E9Q236">
    <property type="molecule type" value="protein"/>
</dbReference>
<dbReference type="Bgee" id="ENSMUSG00000032849">
    <property type="expression patterns" value="Expressed in urinary bladder urothelium and 211 other cell types or tissues"/>
</dbReference>
<dbReference type="ExpressionAtlas" id="E9Q236">
    <property type="expression patterns" value="baseline and differential"/>
</dbReference>
<dbReference type="GO" id="GO:0016324">
    <property type="term" value="C:apical plasma membrane"/>
    <property type="evidence" value="ECO:0000314"/>
    <property type="project" value="UniProtKB"/>
</dbReference>
<dbReference type="GO" id="GO:0016323">
    <property type="term" value="C:basolateral plasma membrane"/>
    <property type="evidence" value="ECO:0000314"/>
    <property type="project" value="UniProtKB"/>
</dbReference>
<dbReference type="GO" id="GO:0005794">
    <property type="term" value="C:Golgi apparatus"/>
    <property type="evidence" value="ECO:0007669"/>
    <property type="project" value="Ensembl"/>
</dbReference>
<dbReference type="GO" id="GO:0016020">
    <property type="term" value="C:membrane"/>
    <property type="evidence" value="ECO:0000266"/>
    <property type="project" value="MGI"/>
</dbReference>
<dbReference type="GO" id="GO:0005730">
    <property type="term" value="C:nucleolus"/>
    <property type="evidence" value="ECO:0007669"/>
    <property type="project" value="Ensembl"/>
</dbReference>
<dbReference type="GO" id="GO:0005886">
    <property type="term" value="C:plasma membrane"/>
    <property type="evidence" value="ECO:0000314"/>
    <property type="project" value="MGI"/>
</dbReference>
<dbReference type="GO" id="GO:0031088">
    <property type="term" value="C:platelet dense granule membrane"/>
    <property type="evidence" value="ECO:0000266"/>
    <property type="project" value="MGI"/>
</dbReference>
<dbReference type="GO" id="GO:0015432">
    <property type="term" value="F:ABC-type bile acid transporter activity"/>
    <property type="evidence" value="ECO:0000250"/>
    <property type="project" value="UniProtKB"/>
</dbReference>
<dbReference type="GO" id="GO:0015431">
    <property type="term" value="F:ABC-type glutathione S-conjugate transporter activity"/>
    <property type="evidence" value="ECO:0000250"/>
    <property type="project" value="UniProtKB"/>
</dbReference>
<dbReference type="GO" id="GO:0008559">
    <property type="term" value="F:ABC-type xenobiotic transporter activity"/>
    <property type="evidence" value="ECO:0007669"/>
    <property type="project" value="UniProtKB-EC"/>
</dbReference>
<dbReference type="GO" id="GO:0015665">
    <property type="term" value="F:alcohol transmembrane transporter activity"/>
    <property type="evidence" value="ECO:0000266"/>
    <property type="project" value="MGI"/>
</dbReference>
<dbReference type="GO" id="GO:0005524">
    <property type="term" value="F:ATP binding"/>
    <property type="evidence" value="ECO:0007669"/>
    <property type="project" value="UniProtKB-KW"/>
</dbReference>
<dbReference type="GO" id="GO:0016887">
    <property type="term" value="F:ATP hydrolysis activity"/>
    <property type="evidence" value="ECO:0007669"/>
    <property type="project" value="InterPro"/>
</dbReference>
<dbReference type="GO" id="GO:0042626">
    <property type="term" value="F:ATPase-coupled transmembrane transporter activity"/>
    <property type="evidence" value="ECO:0000250"/>
    <property type="project" value="UniProtKB"/>
</dbReference>
<dbReference type="GO" id="GO:0015562">
    <property type="term" value="F:efflux transmembrane transporter activity"/>
    <property type="evidence" value="ECO:0007669"/>
    <property type="project" value="Ensembl"/>
</dbReference>
<dbReference type="GO" id="GO:0034634">
    <property type="term" value="F:glutathione transmembrane transporter activity"/>
    <property type="evidence" value="ECO:0000250"/>
    <property type="project" value="UniProtKB"/>
</dbReference>
<dbReference type="GO" id="GO:0001409">
    <property type="term" value="F:guanine nucleotide transmembrane transporter activity"/>
    <property type="evidence" value="ECO:0000250"/>
    <property type="project" value="UniProtKB"/>
</dbReference>
<dbReference type="GO" id="GO:0015132">
    <property type="term" value="F:prostaglandin transmembrane transporter activity"/>
    <property type="evidence" value="ECO:0000250"/>
    <property type="project" value="UniProtKB"/>
</dbReference>
<dbReference type="GO" id="GO:0015143">
    <property type="term" value="F:urate transmembrane transporter activity"/>
    <property type="evidence" value="ECO:0000250"/>
    <property type="project" value="UniProtKB"/>
</dbReference>
<dbReference type="GO" id="GO:0042910">
    <property type="term" value="F:xenobiotic transmembrane transporter activity"/>
    <property type="evidence" value="ECO:0000250"/>
    <property type="project" value="UniProtKB"/>
</dbReference>
<dbReference type="GO" id="GO:0015721">
    <property type="term" value="P:bile acid and bile salt transport"/>
    <property type="evidence" value="ECO:0000250"/>
    <property type="project" value="UniProtKB"/>
</dbReference>
<dbReference type="GO" id="GO:0070730">
    <property type="term" value="P:cAMP transport"/>
    <property type="evidence" value="ECO:0000250"/>
    <property type="project" value="UniProtKB"/>
</dbReference>
<dbReference type="GO" id="GO:0060271">
    <property type="term" value="P:cilium assembly"/>
    <property type="evidence" value="ECO:0000266"/>
    <property type="project" value="MGI"/>
</dbReference>
<dbReference type="GO" id="GO:0140115">
    <property type="term" value="P:export across plasma membrane"/>
    <property type="evidence" value="ECO:0007669"/>
    <property type="project" value="Ensembl"/>
</dbReference>
<dbReference type="GO" id="GO:1901571">
    <property type="term" value="P:fatty acid derivative transport"/>
    <property type="evidence" value="ECO:0000266"/>
    <property type="project" value="MGI"/>
</dbReference>
<dbReference type="GO" id="GO:0071716">
    <property type="term" value="P:leukotriene transport"/>
    <property type="evidence" value="ECO:0000250"/>
    <property type="project" value="UniProtKB"/>
</dbReference>
<dbReference type="GO" id="GO:0015850">
    <property type="term" value="P:organic hydroxy compound transport"/>
    <property type="evidence" value="ECO:0000266"/>
    <property type="project" value="MGI"/>
</dbReference>
<dbReference type="GO" id="GO:0032310">
    <property type="term" value="P:prostaglandin secretion"/>
    <property type="evidence" value="ECO:0000266"/>
    <property type="project" value="MGI"/>
</dbReference>
<dbReference type="GO" id="GO:0015732">
    <property type="term" value="P:prostaglandin transport"/>
    <property type="evidence" value="ECO:0000250"/>
    <property type="project" value="UniProtKB"/>
</dbReference>
<dbReference type="GO" id="GO:0015747">
    <property type="term" value="P:urate transport"/>
    <property type="evidence" value="ECO:0000250"/>
    <property type="project" value="UniProtKB"/>
</dbReference>
<dbReference type="GO" id="GO:0006855">
    <property type="term" value="P:xenobiotic transmembrane transport"/>
    <property type="evidence" value="ECO:0000304"/>
    <property type="project" value="MGI"/>
</dbReference>
<dbReference type="CDD" id="cd18593">
    <property type="entry name" value="ABC_6TM_MRP4_D1_like"/>
    <property type="match status" value="1"/>
</dbReference>
<dbReference type="CDD" id="cd18601">
    <property type="entry name" value="ABC_6TM_MRP4_D2_like"/>
    <property type="match status" value="1"/>
</dbReference>
<dbReference type="CDD" id="cd03250">
    <property type="entry name" value="ABCC_MRP_domain1"/>
    <property type="match status" value="1"/>
</dbReference>
<dbReference type="CDD" id="cd03244">
    <property type="entry name" value="ABCC_MRP_domain2"/>
    <property type="match status" value="1"/>
</dbReference>
<dbReference type="FunFam" id="1.20.1560.10:FF:000027">
    <property type="entry name" value="ATP-binding cassette subfamily C member 4"/>
    <property type="match status" value="1"/>
</dbReference>
<dbReference type="FunFam" id="1.20.1560.10:FF:000014">
    <property type="entry name" value="Multidrug resistance-associated protein member 4"/>
    <property type="match status" value="1"/>
</dbReference>
<dbReference type="FunFam" id="3.40.50.300:FF:000163">
    <property type="entry name" value="Multidrug resistance-associated protein member 4"/>
    <property type="match status" value="1"/>
</dbReference>
<dbReference type="FunFam" id="3.40.50.300:FF:000482">
    <property type="entry name" value="Multidrug resistance-associated protein member 4"/>
    <property type="match status" value="1"/>
</dbReference>
<dbReference type="Gene3D" id="1.20.1560.10">
    <property type="entry name" value="ABC transporter type 1, transmembrane domain"/>
    <property type="match status" value="2"/>
</dbReference>
<dbReference type="Gene3D" id="3.40.50.300">
    <property type="entry name" value="P-loop containing nucleotide triphosphate hydrolases"/>
    <property type="match status" value="2"/>
</dbReference>
<dbReference type="InterPro" id="IPR003593">
    <property type="entry name" value="AAA+_ATPase"/>
</dbReference>
<dbReference type="InterPro" id="IPR011527">
    <property type="entry name" value="ABC1_TM_dom"/>
</dbReference>
<dbReference type="InterPro" id="IPR036640">
    <property type="entry name" value="ABC1_TM_sf"/>
</dbReference>
<dbReference type="InterPro" id="IPR003439">
    <property type="entry name" value="ABC_transporter-like_ATP-bd"/>
</dbReference>
<dbReference type="InterPro" id="IPR017871">
    <property type="entry name" value="ABC_transporter-like_CS"/>
</dbReference>
<dbReference type="InterPro" id="IPR050173">
    <property type="entry name" value="ABC_transporter_C-like"/>
</dbReference>
<dbReference type="InterPro" id="IPR030240">
    <property type="entry name" value="ABCC4_TMD1"/>
</dbReference>
<dbReference type="InterPro" id="IPR047083">
    <property type="entry name" value="ABCC4_TMD2"/>
</dbReference>
<dbReference type="InterPro" id="IPR027417">
    <property type="entry name" value="P-loop_NTPase"/>
</dbReference>
<dbReference type="PANTHER" id="PTHR24223">
    <property type="entry name" value="ATP-BINDING CASSETTE SUB-FAMILY C"/>
    <property type="match status" value="1"/>
</dbReference>
<dbReference type="PANTHER" id="PTHR24223:SF357">
    <property type="entry name" value="ATP-BINDING CASSETTE SUB-FAMILY C MEMBER 4"/>
    <property type="match status" value="1"/>
</dbReference>
<dbReference type="Pfam" id="PF00664">
    <property type="entry name" value="ABC_membrane"/>
    <property type="match status" value="2"/>
</dbReference>
<dbReference type="Pfam" id="PF00005">
    <property type="entry name" value="ABC_tran"/>
    <property type="match status" value="2"/>
</dbReference>
<dbReference type="SMART" id="SM00382">
    <property type="entry name" value="AAA"/>
    <property type="match status" value="2"/>
</dbReference>
<dbReference type="SUPFAM" id="SSF90123">
    <property type="entry name" value="ABC transporter transmembrane region"/>
    <property type="match status" value="2"/>
</dbReference>
<dbReference type="SUPFAM" id="SSF52540">
    <property type="entry name" value="P-loop containing nucleoside triphosphate hydrolases"/>
    <property type="match status" value="2"/>
</dbReference>
<dbReference type="PROSITE" id="PS50929">
    <property type="entry name" value="ABC_TM1F"/>
    <property type="match status" value="2"/>
</dbReference>
<dbReference type="PROSITE" id="PS00211">
    <property type="entry name" value="ABC_TRANSPORTER_1"/>
    <property type="match status" value="2"/>
</dbReference>
<dbReference type="PROSITE" id="PS50893">
    <property type="entry name" value="ABC_TRANSPORTER_2"/>
    <property type="match status" value="2"/>
</dbReference>
<reference key="1">
    <citation type="journal article" date="2005" name="Science">
        <title>The transcriptional landscape of the mammalian genome.</title>
        <authorList>
            <person name="Carninci P."/>
            <person name="Kasukawa T."/>
            <person name="Katayama S."/>
            <person name="Gough J."/>
            <person name="Frith M.C."/>
            <person name="Maeda N."/>
            <person name="Oyama R."/>
            <person name="Ravasi T."/>
            <person name="Lenhard B."/>
            <person name="Wells C."/>
            <person name="Kodzius R."/>
            <person name="Shimokawa K."/>
            <person name="Bajic V.B."/>
            <person name="Brenner S.E."/>
            <person name="Batalov S."/>
            <person name="Forrest A.R."/>
            <person name="Zavolan M."/>
            <person name="Davis M.J."/>
            <person name="Wilming L.G."/>
            <person name="Aidinis V."/>
            <person name="Allen J.E."/>
            <person name="Ambesi-Impiombato A."/>
            <person name="Apweiler R."/>
            <person name="Aturaliya R.N."/>
            <person name="Bailey T.L."/>
            <person name="Bansal M."/>
            <person name="Baxter L."/>
            <person name="Beisel K.W."/>
            <person name="Bersano T."/>
            <person name="Bono H."/>
            <person name="Chalk A.M."/>
            <person name="Chiu K.P."/>
            <person name="Choudhary V."/>
            <person name="Christoffels A."/>
            <person name="Clutterbuck D.R."/>
            <person name="Crowe M.L."/>
            <person name="Dalla E."/>
            <person name="Dalrymple B.P."/>
            <person name="de Bono B."/>
            <person name="Della Gatta G."/>
            <person name="di Bernardo D."/>
            <person name="Down T."/>
            <person name="Engstrom P."/>
            <person name="Fagiolini M."/>
            <person name="Faulkner G."/>
            <person name="Fletcher C.F."/>
            <person name="Fukushima T."/>
            <person name="Furuno M."/>
            <person name="Futaki S."/>
            <person name="Gariboldi M."/>
            <person name="Georgii-Hemming P."/>
            <person name="Gingeras T.R."/>
            <person name="Gojobori T."/>
            <person name="Green R.E."/>
            <person name="Gustincich S."/>
            <person name="Harbers M."/>
            <person name="Hayashi Y."/>
            <person name="Hensch T.K."/>
            <person name="Hirokawa N."/>
            <person name="Hill D."/>
            <person name="Huminiecki L."/>
            <person name="Iacono M."/>
            <person name="Ikeo K."/>
            <person name="Iwama A."/>
            <person name="Ishikawa T."/>
            <person name="Jakt M."/>
            <person name="Kanapin A."/>
            <person name="Katoh M."/>
            <person name="Kawasawa Y."/>
            <person name="Kelso J."/>
            <person name="Kitamura H."/>
            <person name="Kitano H."/>
            <person name="Kollias G."/>
            <person name="Krishnan S.P."/>
            <person name="Kruger A."/>
            <person name="Kummerfeld S.K."/>
            <person name="Kurochkin I.V."/>
            <person name="Lareau L.F."/>
            <person name="Lazarevic D."/>
            <person name="Lipovich L."/>
            <person name="Liu J."/>
            <person name="Liuni S."/>
            <person name="McWilliam S."/>
            <person name="Madan Babu M."/>
            <person name="Madera M."/>
            <person name="Marchionni L."/>
            <person name="Matsuda H."/>
            <person name="Matsuzawa S."/>
            <person name="Miki H."/>
            <person name="Mignone F."/>
            <person name="Miyake S."/>
            <person name="Morris K."/>
            <person name="Mottagui-Tabar S."/>
            <person name="Mulder N."/>
            <person name="Nakano N."/>
            <person name="Nakauchi H."/>
            <person name="Ng P."/>
            <person name="Nilsson R."/>
            <person name="Nishiguchi S."/>
            <person name="Nishikawa S."/>
            <person name="Nori F."/>
            <person name="Ohara O."/>
            <person name="Okazaki Y."/>
            <person name="Orlando V."/>
            <person name="Pang K.C."/>
            <person name="Pavan W.J."/>
            <person name="Pavesi G."/>
            <person name="Pesole G."/>
            <person name="Petrovsky N."/>
            <person name="Piazza S."/>
            <person name="Reed J."/>
            <person name="Reid J.F."/>
            <person name="Ring B.Z."/>
            <person name="Ringwald M."/>
            <person name="Rost B."/>
            <person name="Ruan Y."/>
            <person name="Salzberg S.L."/>
            <person name="Sandelin A."/>
            <person name="Schneider C."/>
            <person name="Schoenbach C."/>
            <person name="Sekiguchi K."/>
            <person name="Semple C.A."/>
            <person name="Seno S."/>
            <person name="Sessa L."/>
            <person name="Sheng Y."/>
            <person name="Shibata Y."/>
            <person name="Shimada H."/>
            <person name="Shimada K."/>
            <person name="Silva D."/>
            <person name="Sinclair B."/>
            <person name="Sperling S."/>
            <person name="Stupka E."/>
            <person name="Sugiura K."/>
            <person name="Sultana R."/>
            <person name="Takenaka Y."/>
            <person name="Taki K."/>
            <person name="Tammoja K."/>
            <person name="Tan S.L."/>
            <person name="Tang S."/>
            <person name="Taylor M.S."/>
            <person name="Tegner J."/>
            <person name="Teichmann S.A."/>
            <person name="Ueda H.R."/>
            <person name="van Nimwegen E."/>
            <person name="Verardo R."/>
            <person name="Wei C.L."/>
            <person name="Yagi K."/>
            <person name="Yamanishi H."/>
            <person name="Zabarovsky E."/>
            <person name="Zhu S."/>
            <person name="Zimmer A."/>
            <person name="Hide W."/>
            <person name="Bult C."/>
            <person name="Grimmond S.M."/>
            <person name="Teasdale R.D."/>
            <person name="Liu E.T."/>
            <person name="Brusic V."/>
            <person name="Quackenbush J."/>
            <person name="Wahlestedt C."/>
            <person name="Mattick J.S."/>
            <person name="Hume D.A."/>
            <person name="Kai C."/>
            <person name="Sasaki D."/>
            <person name="Tomaru Y."/>
            <person name="Fukuda S."/>
            <person name="Kanamori-Katayama M."/>
            <person name="Suzuki M."/>
            <person name="Aoki J."/>
            <person name="Arakawa T."/>
            <person name="Iida J."/>
            <person name="Imamura K."/>
            <person name="Itoh M."/>
            <person name="Kato T."/>
            <person name="Kawaji H."/>
            <person name="Kawagashira N."/>
            <person name="Kawashima T."/>
            <person name="Kojima M."/>
            <person name="Kondo S."/>
            <person name="Konno H."/>
            <person name="Nakano K."/>
            <person name="Ninomiya N."/>
            <person name="Nishio T."/>
            <person name="Okada M."/>
            <person name="Plessy C."/>
            <person name="Shibata K."/>
            <person name="Shiraki T."/>
            <person name="Suzuki S."/>
            <person name="Tagami M."/>
            <person name="Waki K."/>
            <person name="Watahiki A."/>
            <person name="Okamura-Oho Y."/>
            <person name="Suzuki H."/>
            <person name="Kawai J."/>
            <person name="Hayashizaki Y."/>
        </authorList>
    </citation>
    <scope>NUCLEOTIDE SEQUENCE [LARGE SCALE MRNA]</scope>
    <source>
        <strain>C57BL/6J</strain>
        <tissue>Embryo</tissue>
    </source>
</reference>
<reference key="2">
    <citation type="journal article" date="2016" name="Gene">
        <title>A novel exon generates ubiquitously expressed alternatively spliced new transcript of mouse Abcc4 gene.</title>
        <authorList>
            <person name="Rehman S.U."/>
            <person name="Ishqi H.M."/>
            <person name="Husain M.A."/>
            <person name="Sarwar T."/>
            <person name="Tabish M."/>
        </authorList>
    </citation>
    <scope>NUCLEOTIDE SEQUENCE [MRNA] (ISOFORM 3)</scope>
    <scope>DEVELOPMENTAL STAGE (ISOFORM 3)</scope>
</reference>
<reference key="3">
    <citation type="journal article" date="2009" name="PLoS Biol.">
        <title>Lineage-specific biology revealed by a finished genome assembly of the mouse.</title>
        <authorList>
            <person name="Church D.M."/>
            <person name="Goodstadt L."/>
            <person name="Hillier L.W."/>
            <person name="Zody M.C."/>
            <person name="Goldstein S."/>
            <person name="She X."/>
            <person name="Bult C.J."/>
            <person name="Agarwala R."/>
            <person name="Cherry J.L."/>
            <person name="DiCuccio M."/>
            <person name="Hlavina W."/>
            <person name="Kapustin Y."/>
            <person name="Meric P."/>
            <person name="Maglott D."/>
            <person name="Birtle Z."/>
            <person name="Marques A.C."/>
            <person name="Graves T."/>
            <person name="Zhou S."/>
            <person name="Teague B."/>
            <person name="Potamousis K."/>
            <person name="Churas C."/>
            <person name="Place M."/>
            <person name="Herschleb J."/>
            <person name="Runnheim R."/>
            <person name="Forrest D."/>
            <person name="Amos-Landgraf J."/>
            <person name="Schwartz D.C."/>
            <person name="Cheng Z."/>
            <person name="Lindblad-Toh K."/>
            <person name="Eichler E.E."/>
            <person name="Ponting C.P."/>
        </authorList>
    </citation>
    <scope>NUCLEOTIDE SEQUENCE [LARGE SCALE GENOMIC DNA]</scope>
    <source>
        <strain>C57BL/6J</strain>
    </source>
</reference>
<reference key="4">
    <citation type="journal article" date="2004" name="Genome Res.">
        <title>The status, quality, and expansion of the NIH full-length cDNA project: the Mammalian Gene Collection (MGC).</title>
        <authorList>
            <consortium name="The MGC Project Team"/>
        </authorList>
    </citation>
    <scope>NUCLEOTIDE SEQUENCE [LARGE SCALE MRNA]</scope>
    <source>
        <tissue>Brain</tissue>
    </source>
</reference>
<reference key="5">
    <citation type="journal article" date="2007" name="Proc. Natl. Acad. Sci. U.S.A.">
        <title>Large-scale phosphorylation analysis of mouse liver.</title>
        <authorList>
            <person name="Villen J."/>
            <person name="Beausoleil S.A."/>
            <person name="Gerber S.A."/>
            <person name="Gygi S.P."/>
        </authorList>
    </citation>
    <scope>IDENTIFICATION BY MASS SPECTROMETRY [LARGE SCALE ANALYSIS]</scope>
</reference>
<reference key="6">
    <citation type="journal article" date="2009" name="Immunity">
        <title>The phagosomal proteome in interferon-gamma-activated macrophages.</title>
        <authorList>
            <person name="Trost M."/>
            <person name="English L."/>
            <person name="Lemieux S."/>
            <person name="Courcelles M."/>
            <person name="Desjardins M."/>
            <person name="Thibault P."/>
        </authorList>
    </citation>
    <scope>IDENTIFICATION BY MASS SPECTROMETRY [LARGE SCALE ANALYSIS]</scope>
</reference>
<reference key="7">
    <citation type="journal article" date="2010" name="Cell">
        <title>A tissue-specific atlas of mouse protein phosphorylation and expression.</title>
        <authorList>
            <person name="Huttlin E.L."/>
            <person name="Jedrychowski M.P."/>
            <person name="Elias J.E."/>
            <person name="Goswami T."/>
            <person name="Rad R."/>
            <person name="Beausoleil S.A."/>
            <person name="Villen J."/>
            <person name="Haas W."/>
            <person name="Sowa M.E."/>
            <person name="Gygi S.P."/>
        </authorList>
    </citation>
    <scope>IDENTIFICATION BY MASS SPECTROMETRY [LARGE SCALE ANALYSIS]</scope>
</reference>
<reference key="8">
    <citation type="journal article" date="2003" name="Hepatology">
        <title>Cotransport of reduced glutathione with bile salts by MRP4 (ABCC4) localized to the basolateral hepatocyte membrane.</title>
        <authorList>
            <person name="Rius M."/>
            <person name="Nies A.T."/>
            <person name="Hummel-Eisenbeiss J."/>
            <person name="Jedlitschky G."/>
            <person name="Keppler D."/>
        </authorList>
    </citation>
    <scope>SUBCELLULAR LOCATION</scope>
</reference>
<reference key="9">
    <citation type="journal article" date="2004" name="Mol. Cell. Biol.">
        <title>Mrp4 confers resistance to topotecan and protects the brain from chemotherapy.</title>
        <authorList>
            <person name="Leggas M."/>
            <person name="Adachi M."/>
            <person name="Scheffer G.L."/>
            <person name="Sun D."/>
            <person name="Wielinga P."/>
            <person name="Du G."/>
            <person name="Mercer K.E."/>
            <person name="Zhuang Y."/>
            <person name="Panetta J.C."/>
            <person name="Johnston B."/>
            <person name="Scheper R.J."/>
            <person name="Stewart C.F."/>
            <person name="Schuetz J.D."/>
        </authorList>
    </citation>
    <scope>DISRUPTION PHENOTYPE</scope>
    <scope>FUNCTION</scope>
    <scope>SUBCELLULAR LOCATION</scope>
    <scope>CATALYTIC ACTIVITY</scope>
</reference>
<reference key="10">
    <citation type="journal article" date="2007" name="Cancer Res.">
        <title>Multidrug resistance protein 4 protects bone marrow, thymus, spleen, and intestine from nucleotide analogue-induced damage.</title>
        <authorList>
            <person name="Belinsky M.G."/>
            <person name="Guo P."/>
            <person name="Lee K."/>
            <person name="Zhou F."/>
            <person name="Kotova E."/>
            <person name="Grinberg A."/>
            <person name="Westphal H."/>
            <person name="Shchaveleva I."/>
            <person name="Klein-Szanto A."/>
            <person name="Gallo J.M."/>
            <person name="Kruh G.D."/>
        </authorList>
    </citation>
    <scope>DISRUPTION PHENOTYPE</scope>
    <scope>FUNCTION</scope>
    <scope>CATALYTIC ACTIVITY</scope>
</reference>
<feature type="chain" id="PRO_0000452319" description="ATP-binding cassette sub-family C member 4">
    <location>
        <begin position="1"/>
        <end position="1325"/>
    </location>
</feature>
<feature type="transmembrane region" description="Helical" evidence="2 4">
    <location>
        <begin position="93"/>
        <end position="113"/>
    </location>
</feature>
<feature type="transmembrane region" description="Helical" evidence="2 4">
    <location>
        <begin position="136"/>
        <end position="156"/>
    </location>
</feature>
<feature type="transmembrane region" description="Helical" evidence="2 4">
    <location>
        <begin position="205"/>
        <end position="225"/>
    </location>
</feature>
<feature type="transmembrane region" description="Helical" evidence="2 4">
    <location>
        <begin position="227"/>
        <end position="247"/>
    </location>
</feature>
<feature type="transmembrane region" description="Helical" evidence="2 4">
    <location>
        <begin position="322"/>
        <end position="342"/>
    </location>
</feature>
<feature type="transmembrane region" description="Helical" evidence="2 4">
    <location>
        <begin position="351"/>
        <end position="371"/>
    </location>
</feature>
<feature type="transmembrane region" description="Helical" evidence="2 4">
    <location>
        <begin position="710"/>
        <end position="730"/>
    </location>
</feature>
<feature type="transmembrane region" description="Helical" evidence="2 4">
    <location>
        <begin position="761"/>
        <end position="781"/>
    </location>
</feature>
<feature type="transmembrane region" description="Helical" evidence="2 4">
    <location>
        <begin position="849"/>
        <end position="869"/>
    </location>
</feature>
<feature type="transmembrane region" description="Helical" evidence="2 4">
    <location>
        <begin position="954"/>
        <end position="974"/>
    </location>
</feature>
<feature type="transmembrane region" description="Helical" evidence="2 4">
    <location>
        <begin position="977"/>
        <end position="997"/>
    </location>
</feature>
<feature type="domain" description="ABC transmembrane type-1 1" evidence="4">
    <location>
        <begin position="93"/>
        <end position="377"/>
    </location>
</feature>
<feature type="domain" description="ABC transporter 1" evidence="3">
    <location>
        <begin position="410"/>
        <end position="633"/>
    </location>
</feature>
<feature type="domain" description="ABC transmembrane type-1 2" evidence="4">
    <location>
        <begin position="714"/>
        <end position="1005"/>
    </location>
</feature>
<feature type="domain" description="ABC transporter 2" evidence="3">
    <location>
        <begin position="1041"/>
        <end position="1274"/>
    </location>
</feature>
<feature type="region of interest" description="Disordered" evidence="5">
    <location>
        <begin position="657"/>
        <end position="690"/>
    </location>
</feature>
<feature type="short sequence motif" description="PDZ-binding" evidence="1">
    <location>
        <begin position="1322"/>
        <end position="1325"/>
    </location>
</feature>
<feature type="compositionally biased region" description="Polar residues" evidence="5">
    <location>
        <begin position="657"/>
        <end position="667"/>
    </location>
</feature>
<feature type="binding site" evidence="3">
    <location>
        <begin position="445"/>
        <end position="452"/>
    </location>
    <ligand>
        <name>ATP</name>
        <dbReference type="ChEBI" id="CHEBI:30616"/>
    </ligand>
</feature>
<feature type="binding site" evidence="3">
    <location>
        <begin position="1075"/>
        <end position="1082"/>
    </location>
    <ligand>
        <name>ATP</name>
        <dbReference type="ChEBI" id="CHEBI:30616"/>
    </ligand>
</feature>
<feature type="modified residue" description="Phosphothreonine" evidence="1">
    <location>
        <position position="646"/>
    </location>
</feature>
<feature type="modified residue" description="Phosphothreonine" evidence="1">
    <location>
        <position position="648"/>
    </location>
</feature>
<feature type="modified residue" description="Phosphoserine" evidence="1">
    <location>
        <position position="664"/>
    </location>
</feature>
<feature type="modified residue" description="Phosphoserine" evidence="1">
    <location>
        <position position="668"/>
    </location>
</feature>
<feature type="splice variant" id="VSP_060951" description="In isoform 3.">
    <original>LPVHTEVKPNPLQDANLCSRVFFW</original>
    <variation>EMLPSEVVKPREER</variation>
    <location>
        <begin position="2"/>
        <end position="25"/>
    </location>
</feature>
<feature type="splice variant" id="VSP_060952" description="In isoform 2 and isoform 3.">
    <location>
        <begin position="103"/>
        <end position="177"/>
    </location>
</feature>
<feature type="sequence conflict" description="In Ref. 4; AAI71974." evidence="12" ref="4">
    <original>T</original>
    <variation>M</variation>
    <location>
        <position position="682"/>
    </location>
</feature>
<feature type="sequence conflict" description="In Ref. 1; BAE34169." evidence="12" ref="1">
    <original>Y</original>
    <variation>C</variation>
    <location>
        <position position="704"/>
    </location>
</feature>
<feature type="sequence conflict" description="In Ref. 4; AAI71974." evidence="12" ref="4">
    <original>A</original>
    <variation>T</variation>
    <location>
        <position position="769"/>
    </location>
</feature>
<organism>
    <name type="scientific">Mus musculus</name>
    <name type="common">Mouse</name>
    <dbReference type="NCBI Taxonomy" id="10090"/>
    <lineage>
        <taxon>Eukaryota</taxon>
        <taxon>Metazoa</taxon>
        <taxon>Chordata</taxon>
        <taxon>Craniata</taxon>
        <taxon>Vertebrata</taxon>
        <taxon>Euteleostomi</taxon>
        <taxon>Mammalia</taxon>
        <taxon>Eutheria</taxon>
        <taxon>Euarchontoglires</taxon>
        <taxon>Glires</taxon>
        <taxon>Rodentia</taxon>
        <taxon>Myomorpha</taxon>
        <taxon>Muroidea</taxon>
        <taxon>Muridae</taxon>
        <taxon>Murinae</taxon>
        <taxon>Mus</taxon>
        <taxon>Mus</taxon>
    </lineage>
</organism>
<sequence>MLPVHTEVKPNPLQDANLCSRVFFWWLNPLFKTGHKRRLEEDDMFSVLPEDRSKHLGEELQRYWDKELLRAKKDSRKPSLTKAIIKCYWKSYLILGIFTLIEEGTRVVQPLFLGKIIEYFEKYDPDDSVALHTAYGYAAVLSMCTLILAILHHLYFYHVQCAGMRLRVAMCHMIYRKALRLSNSAMGKTTTGQIVNLLSNDVNKFDQVTIFLHFLWAGPLQAIAVTVLLWVEIGISCLAGLAVLVILLPLQSCIGKLFSSLRSKTAAFTDARIRTMNEVITGMRIIKMYAWEKSFADLIANLRKKEISKILGSSYLRGMNMASFFIANKVILFVTFTSYVLLGNEITASHVFVAMTLYGAVRLTVTLFFPSAIERGSEAIVSIRRIKNFLLLDELPQRKAHVPSDGKAIVHVQDFTAFWDKALDSPTLQGLSFIARPGELLAVVGPVGAGKSSLLSAVLGELPPASGLVSVHGRIAYVSQQPWVFSGTVRSNILFGKKYEKERYEKVIKACALKKDLQLLEDGDLTVIGDRGATLSGGQKARVNLARAVYQDADIYLLDDPLSAVDAEVGKHLFQLCICQALHEKITILVTHQLQYLKAASHILILKDGEMVQKGTYTEFLKSGVDFGSLLKKENEEAEPSTAPGTPTLRKRTFSEASIWSQQSSRPSLKDGAPEGQDAENTQAVQPEESRSEGRIGFKAYKNYFSAGASWFFIIFLVLLNMVGQVFYVLQDWWLSHWANKQGALNNTRNANGNITETLDLSWYLGIYAGLTAVTVLFGIARSLLVFYILVNASQTLHNRMFESILKAPVLFFDRNPIGRILNRFSKDIGHMDDLLPLTFLDFIQTLLLVVSVIAVAAAVIPWILIPLVPLSVVFLVLRRYFLETSRDVKRLESTTRSPVFSHLSSSLQGLWTIRAYKAEERCQELFDAHQDLHSEAWFLFLTTSRWFAVRLDAICAIFVIVVAFGSLVLAKTLNAGQVGLALSYALTLMGMFQWSVRQSAEVENMMISVERVIEYTDLEKEAPWECKKRPPPGWPHEGVIVFDNVNFTYSLDGPLVLKHLTALIKSREKVGIVGRTGAGKSSLISALFRLSEPEGKIWIDKILTTEIGLHDLRKKMSIIPQEPVLFTGTMRKNLDPFNEHTDEELWRALEEVQLKEAIEDLPGKMDTELAESGSNFSVGQRQLVCLARAILKNNRILIIDEATANVDPRTDELIQQKIREKFAQCTVLTIAHRLNTIIDSDKIMVLDSGRLKEYDEPYVLLQNPESLFYKMVQQLGKGEAAALTETAKQVYFRRNYPDITFTSPAVMNTSNGQPSALTIFETAL</sequence>
<proteinExistence type="evidence at protein level"/>
<name>MRP4_MOUSE</name>
<comment type="function">
    <text evidence="13 14">ATP-dependent transporter of the ATP-binding cassette (ABC) family that actively extrudes physiological compounds and xenobiotics from cells. Transports a range of endogenous molecules that have a key role in cellular communication and signaling, including cyclic nucleotides such as cyclic AMP (cAMP) and cyclic GMP (cGMP), bile acids, steroid conjugates, urate, and prostaglandins. Also mediates the ATP-dependent efflux of glutathione conjugates such as leukotriene C4 (LTC4) and leukotriene B4 (LTB4). The presence of GSH is necessary for the ATP-dependent transport of LTB4, whereas GSH is not required for the transport of LTC4. Mediates the cotransport of bile acids with reduced glutathione (GSH). Transports a wide range of drugs and their metabolites, including anticancer, antiviral and antibiotics molecules (Probable). Confers resistance to anticancer agents (Probable).</text>
</comment>
<comment type="catalytic activity">
    <reaction evidence="13 14">
        <text>ATP + H2O + xenobioticSide 1 = ADP + phosphate + xenobioticSide 2.</text>
        <dbReference type="EC" id="7.6.2.2"/>
    </reaction>
</comment>
<comment type="catalytic activity">
    <reaction evidence="1">
        <text>an S-substituted glutathione(in) + ATP + H2O = an S-substituted glutathione(out) + ADP + phosphate + H(+)</text>
        <dbReference type="Rhea" id="RHEA:19121"/>
        <dbReference type="ChEBI" id="CHEBI:15377"/>
        <dbReference type="ChEBI" id="CHEBI:15378"/>
        <dbReference type="ChEBI" id="CHEBI:30616"/>
        <dbReference type="ChEBI" id="CHEBI:43474"/>
        <dbReference type="ChEBI" id="CHEBI:90779"/>
        <dbReference type="ChEBI" id="CHEBI:456216"/>
        <dbReference type="EC" id="7.6.2.3"/>
    </reaction>
    <physiologicalReaction direction="left-to-right" evidence="1">
        <dbReference type="Rhea" id="RHEA:19122"/>
    </physiologicalReaction>
</comment>
<comment type="catalytic activity">
    <reaction evidence="1">
        <text>17beta-estradiol 17-O-(beta-D-glucuronate)(in) + ATP + H2O = 17beta-estradiol 17-O-(beta-D-glucuronate)(out) + ADP + phosphate + H(+)</text>
        <dbReference type="Rhea" id="RHEA:60128"/>
        <dbReference type="ChEBI" id="CHEBI:15377"/>
        <dbReference type="ChEBI" id="CHEBI:15378"/>
        <dbReference type="ChEBI" id="CHEBI:30616"/>
        <dbReference type="ChEBI" id="CHEBI:43474"/>
        <dbReference type="ChEBI" id="CHEBI:82961"/>
        <dbReference type="ChEBI" id="CHEBI:456216"/>
    </reaction>
    <physiologicalReaction direction="left-to-right" evidence="1">
        <dbReference type="Rhea" id="RHEA:60129"/>
    </physiologicalReaction>
</comment>
<comment type="catalytic activity">
    <reaction evidence="1">
        <text>dehydroepiandrosterone 3-sulfate(in) + ATP + H2O = dehydroepiandrosterone 3-sulfate(out) + ADP + phosphate + H(+)</text>
        <dbReference type="Rhea" id="RHEA:61364"/>
        <dbReference type="ChEBI" id="CHEBI:15377"/>
        <dbReference type="ChEBI" id="CHEBI:15378"/>
        <dbReference type="ChEBI" id="CHEBI:30616"/>
        <dbReference type="ChEBI" id="CHEBI:43474"/>
        <dbReference type="ChEBI" id="CHEBI:57905"/>
        <dbReference type="ChEBI" id="CHEBI:456216"/>
    </reaction>
    <physiologicalReaction direction="left-to-right" evidence="1">
        <dbReference type="Rhea" id="RHEA:61365"/>
    </physiologicalReaction>
</comment>
<comment type="catalytic activity">
    <reaction evidence="1">
        <text>leukotriene C4(in) + ATP + H2O = leukotriene C4(out) + ADP + phosphate + H(+)</text>
        <dbReference type="Rhea" id="RHEA:38963"/>
        <dbReference type="ChEBI" id="CHEBI:15377"/>
        <dbReference type="ChEBI" id="CHEBI:15378"/>
        <dbReference type="ChEBI" id="CHEBI:30616"/>
        <dbReference type="ChEBI" id="CHEBI:43474"/>
        <dbReference type="ChEBI" id="CHEBI:57973"/>
        <dbReference type="ChEBI" id="CHEBI:456216"/>
    </reaction>
    <physiologicalReaction direction="left-to-right" evidence="1">
        <dbReference type="Rhea" id="RHEA:38964"/>
    </physiologicalReaction>
</comment>
<comment type="catalytic activity">
    <reaction evidence="1">
        <text>leukotriene B4(in) + ATP + H2O = leukotriene B4(out) + ADP + phosphate + H(+)</text>
        <dbReference type="Rhea" id="RHEA:66424"/>
        <dbReference type="ChEBI" id="CHEBI:15377"/>
        <dbReference type="ChEBI" id="CHEBI:15378"/>
        <dbReference type="ChEBI" id="CHEBI:30616"/>
        <dbReference type="ChEBI" id="CHEBI:43474"/>
        <dbReference type="ChEBI" id="CHEBI:57461"/>
        <dbReference type="ChEBI" id="CHEBI:456216"/>
    </reaction>
</comment>
<comment type="catalytic activity">
    <reaction evidence="1">
        <text>urate(in) + ATP + H2O = urate(out) + ADP + phosphate + H(+)</text>
        <dbReference type="Rhea" id="RHEA:16461"/>
        <dbReference type="ChEBI" id="CHEBI:15377"/>
        <dbReference type="ChEBI" id="CHEBI:15378"/>
        <dbReference type="ChEBI" id="CHEBI:17775"/>
        <dbReference type="ChEBI" id="CHEBI:30616"/>
        <dbReference type="ChEBI" id="CHEBI:43474"/>
        <dbReference type="ChEBI" id="CHEBI:456216"/>
    </reaction>
    <physiologicalReaction direction="left-to-right" evidence="1">
        <dbReference type="Rhea" id="RHEA:16462"/>
    </physiologicalReaction>
</comment>
<comment type="catalytic activity">
    <reaction evidence="1">
        <text>3',5'-cyclic GMP(in) + ATP + H2O = 3',5'-cyclic GMP(out) + ADP + phosphate + H(+)</text>
        <dbReference type="Rhea" id="RHEA:66188"/>
        <dbReference type="ChEBI" id="CHEBI:15377"/>
        <dbReference type="ChEBI" id="CHEBI:15378"/>
        <dbReference type="ChEBI" id="CHEBI:30616"/>
        <dbReference type="ChEBI" id="CHEBI:43474"/>
        <dbReference type="ChEBI" id="CHEBI:57746"/>
        <dbReference type="ChEBI" id="CHEBI:456216"/>
    </reaction>
    <physiologicalReaction direction="left-to-right" evidence="1">
        <dbReference type="Rhea" id="RHEA:66189"/>
    </physiologicalReaction>
</comment>
<comment type="catalytic activity">
    <reaction evidence="1">
        <text>3',5'-cyclic AMP(in) + ATP + H2O = 3',5'-cyclic AMP(out) + ADP + phosphate + H(+)</text>
        <dbReference type="Rhea" id="RHEA:66184"/>
        <dbReference type="ChEBI" id="CHEBI:15377"/>
        <dbReference type="ChEBI" id="CHEBI:15378"/>
        <dbReference type="ChEBI" id="CHEBI:30616"/>
        <dbReference type="ChEBI" id="CHEBI:43474"/>
        <dbReference type="ChEBI" id="CHEBI:58165"/>
        <dbReference type="ChEBI" id="CHEBI:456216"/>
    </reaction>
    <physiologicalReaction direction="left-to-right" evidence="1">
        <dbReference type="Rhea" id="RHEA:66185"/>
    </physiologicalReaction>
</comment>
<comment type="catalytic activity">
    <reaction evidence="1">
        <text>prostaglandin E2(in) + ATP + H2O = prostaglandin E2(out) + ADP + phosphate + H(+)</text>
        <dbReference type="Rhea" id="RHEA:66388"/>
        <dbReference type="ChEBI" id="CHEBI:15377"/>
        <dbReference type="ChEBI" id="CHEBI:15378"/>
        <dbReference type="ChEBI" id="CHEBI:30616"/>
        <dbReference type="ChEBI" id="CHEBI:43474"/>
        <dbReference type="ChEBI" id="CHEBI:456216"/>
        <dbReference type="ChEBI" id="CHEBI:606564"/>
    </reaction>
    <physiologicalReaction direction="left-to-right" evidence="1">
        <dbReference type="Rhea" id="RHEA:66389"/>
    </physiologicalReaction>
</comment>
<comment type="catalytic activity">
    <reaction evidence="1">
        <text>prostaglandin E1(in) + ATP + H2O = prostaglandin E1(out) + ADP + phosphate + H(+)</text>
        <dbReference type="Rhea" id="RHEA:66392"/>
        <dbReference type="ChEBI" id="CHEBI:15377"/>
        <dbReference type="ChEBI" id="CHEBI:15378"/>
        <dbReference type="ChEBI" id="CHEBI:30616"/>
        <dbReference type="ChEBI" id="CHEBI:43474"/>
        <dbReference type="ChEBI" id="CHEBI:57397"/>
        <dbReference type="ChEBI" id="CHEBI:456216"/>
    </reaction>
    <physiologicalReaction direction="left-to-right" evidence="1">
        <dbReference type="Rhea" id="RHEA:66393"/>
    </physiologicalReaction>
</comment>
<comment type="catalytic activity">
    <reaction evidence="1">
        <text>glycodeoxycholate(in) + glutathione(in) + ATP + H2O = glycodeoxycholate(out) + glutathione(out) + ADP + phosphate + H(+)</text>
        <dbReference type="Rhea" id="RHEA:66380"/>
        <dbReference type="ChEBI" id="CHEBI:15377"/>
        <dbReference type="ChEBI" id="CHEBI:15378"/>
        <dbReference type="ChEBI" id="CHEBI:30616"/>
        <dbReference type="ChEBI" id="CHEBI:43474"/>
        <dbReference type="ChEBI" id="CHEBI:57925"/>
        <dbReference type="ChEBI" id="CHEBI:82982"/>
        <dbReference type="ChEBI" id="CHEBI:456216"/>
    </reaction>
    <physiologicalReaction direction="left-to-right" evidence="1">
        <dbReference type="Rhea" id="RHEA:66381"/>
    </physiologicalReaction>
</comment>
<comment type="catalytic activity">
    <reaction evidence="1">
        <text>cholate(in) + glutathione(in) + ATP + H2O = cholate(out) + glutathione(out) + ADP + phosphate + H(+)</text>
        <dbReference type="Rhea" id="RHEA:66396"/>
        <dbReference type="ChEBI" id="CHEBI:15377"/>
        <dbReference type="ChEBI" id="CHEBI:15378"/>
        <dbReference type="ChEBI" id="CHEBI:29747"/>
        <dbReference type="ChEBI" id="CHEBI:30616"/>
        <dbReference type="ChEBI" id="CHEBI:43474"/>
        <dbReference type="ChEBI" id="CHEBI:57925"/>
        <dbReference type="ChEBI" id="CHEBI:456216"/>
    </reaction>
    <physiologicalReaction direction="left-to-right" evidence="1">
        <dbReference type="Rhea" id="RHEA:66397"/>
    </physiologicalReaction>
</comment>
<comment type="catalytic activity">
    <reaction evidence="1">
        <text>glycocholate(in) + glutathione(in) + ATP + H2O = glycocholate(out) + glutathione(out) + ADP + phosphate + H(+)</text>
        <dbReference type="Rhea" id="RHEA:66400"/>
        <dbReference type="ChEBI" id="CHEBI:15377"/>
        <dbReference type="ChEBI" id="CHEBI:15378"/>
        <dbReference type="ChEBI" id="CHEBI:29746"/>
        <dbReference type="ChEBI" id="CHEBI:30616"/>
        <dbReference type="ChEBI" id="CHEBI:43474"/>
        <dbReference type="ChEBI" id="CHEBI:57925"/>
        <dbReference type="ChEBI" id="CHEBI:456216"/>
    </reaction>
    <physiologicalReaction direction="left-to-right" evidence="1">
        <dbReference type="Rhea" id="RHEA:66401"/>
    </physiologicalReaction>
</comment>
<comment type="catalytic activity">
    <reaction evidence="1">
        <text>taurocholate(in) + glutathione(in) + ATP + H2O = taurocholate(out) + glutathione(out) + ADP + phosphate + H(+)</text>
        <dbReference type="Rhea" id="RHEA:66404"/>
        <dbReference type="ChEBI" id="CHEBI:15377"/>
        <dbReference type="ChEBI" id="CHEBI:15378"/>
        <dbReference type="ChEBI" id="CHEBI:30616"/>
        <dbReference type="ChEBI" id="CHEBI:36257"/>
        <dbReference type="ChEBI" id="CHEBI:43474"/>
        <dbReference type="ChEBI" id="CHEBI:57925"/>
        <dbReference type="ChEBI" id="CHEBI:456216"/>
    </reaction>
    <physiologicalReaction direction="left-to-right" evidence="1">
        <dbReference type="Rhea" id="RHEA:66405"/>
    </physiologicalReaction>
</comment>
<comment type="catalytic activity">
    <reaction evidence="1">
        <text>glycochenodeoxycholate(in) + glutathione(in) + ATP + H2O = glycochenodeoxycholate(out) + glutathione(out) + ADP + phosphate + H(+)</text>
        <dbReference type="Rhea" id="RHEA:66408"/>
        <dbReference type="ChEBI" id="CHEBI:15377"/>
        <dbReference type="ChEBI" id="CHEBI:15378"/>
        <dbReference type="ChEBI" id="CHEBI:30616"/>
        <dbReference type="ChEBI" id="CHEBI:36252"/>
        <dbReference type="ChEBI" id="CHEBI:43474"/>
        <dbReference type="ChEBI" id="CHEBI:57925"/>
        <dbReference type="ChEBI" id="CHEBI:456216"/>
    </reaction>
    <physiologicalReaction direction="left-to-right" evidence="1">
        <dbReference type="Rhea" id="RHEA:66409"/>
    </physiologicalReaction>
</comment>
<comment type="catalytic activity">
    <reaction evidence="1">
        <text>taurochenodeoxycholate(in) + glutathione(in) + ATP + H2O = taurochenodeoxycholate(out) + glutathione(out) + ADP + phosphate + H(+)</text>
        <dbReference type="Rhea" id="RHEA:66412"/>
        <dbReference type="ChEBI" id="CHEBI:9407"/>
        <dbReference type="ChEBI" id="CHEBI:15377"/>
        <dbReference type="ChEBI" id="CHEBI:15378"/>
        <dbReference type="ChEBI" id="CHEBI:30616"/>
        <dbReference type="ChEBI" id="CHEBI:43474"/>
        <dbReference type="ChEBI" id="CHEBI:57925"/>
        <dbReference type="ChEBI" id="CHEBI:456216"/>
    </reaction>
    <physiologicalReaction direction="left-to-right" evidence="1">
        <dbReference type="Rhea" id="RHEA:66413"/>
    </physiologicalReaction>
</comment>
<comment type="catalytic activity">
    <reaction evidence="1">
        <text>glycoursodeoxycholate(in) + glutathione(in) + ATP + H2O = glycoursodeoxycholate(out) + glutathione(out) + ADP + phosphate + H(+)</text>
        <dbReference type="Rhea" id="RHEA:66416"/>
        <dbReference type="ChEBI" id="CHEBI:15377"/>
        <dbReference type="ChEBI" id="CHEBI:15378"/>
        <dbReference type="ChEBI" id="CHEBI:30616"/>
        <dbReference type="ChEBI" id="CHEBI:43474"/>
        <dbReference type="ChEBI" id="CHEBI:57925"/>
        <dbReference type="ChEBI" id="CHEBI:132030"/>
        <dbReference type="ChEBI" id="CHEBI:456216"/>
    </reaction>
    <physiologicalReaction direction="left-to-right" evidence="1">
        <dbReference type="Rhea" id="RHEA:66417"/>
    </physiologicalReaction>
</comment>
<comment type="catalytic activity">
    <reaction evidence="1">
        <text>tauroursodeoxycholate(in) + glutathione(in) + ATP + H2O = tauroursodeoxycholate(out) + glutathione(out) + ADP + phosphate + H(+)</text>
        <dbReference type="Rhea" id="RHEA:66420"/>
        <dbReference type="ChEBI" id="CHEBI:15377"/>
        <dbReference type="ChEBI" id="CHEBI:15378"/>
        <dbReference type="ChEBI" id="CHEBI:30616"/>
        <dbReference type="ChEBI" id="CHEBI:43474"/>
        <dbReference type="ChEBI" id="CHEBI:57925"/>
        <dbReference type="ChEBI" id="CHEBI:132028"/>
        <dbReference type="ChEBI" id="CHEBI:456216"/>
    </reaction>
    <physiologicalReaction direction="left-to-right" evidence="1">
        <dbReference type="Rhea" id="RHEA:66421"/>
    </physiologicalReaction>
</comment>
<comment type="cofactor">
    <cofactor evidence="1">
        <name>Mg(2+)</name>
        <dbReference type="ChEBI" id="CHEBI:18420"/>
    </cofactor>
</comment>
<comment type="subunit">
    <text evidence="1">Interacts (via PDZ-binding motif) with SNX27 (via PDZ domain); this interaction accelerates MRP4 internalization.</text>
</comment>
<comment type="subcellular location">
    <subcellularLocation>
        <location evidence="6 7">Basolateral cell membrane</location>
        <topology evidence="2">Multi-pass membrane protein</topology>
    </subcellularLocation>
    <subcellularLocation>
        <location evidence="7">Apical cell membrane</location>
        <topology evidence="2">Multi-pass membrane protein</topology>
    </subcellularLocation>
    <text evidence="7">Its localization to the basolateral or apical membranes is tissue-dependent.</text>
</comment>
<comment type="alternative products">
    <event type="alternative splicing"/>
    <isoform>
        <id>E9Q236-1</id>
        <name>1</name>
        <sequence type="displayed"/>
    </isoform>
    <isoform>
        <id>E9Q236-2</id>
        <name>2</name>
        <sequence type="described" ref="VSP_060952"/>
    </isoform>
    <isoform>
        <id>E9Q236-3</id>
        <name>3</name>
        <name evidence="11">ABCC4-N</name>
        <sequence type="described" ref="VSP_060951 VSP_060952"/>
    </isoform>
</comment>
<comment type="developmental stage">
    <molecule>Isoform 3</molecule>
    <text evidence="9">Ubiquitously expressed across all developmental stages.</text>
</comment>
<comment type="PTM">
    <text evidence="1">N-glycosylated; leading to substrate-selective effects on its transport activity.</text>
</comment>
<comment type="disruption phenotype">
    <text evidence="7 8">Homozygous null mice are viable and fertile and exhibit any overt phenotype under normal conditions. However deficient mice show impaired anion transport in the blood-brain and blood-cerebrospinal fluid barriers and kidney. Deficient mice show an accumulation of the anticancer agent topotecan in brain and cerebrospinal fluid (CSF) (PubMed:15314169). In addition, penetration of PMEA, an antiviral agent, into the brain is increased in deficient mice (PubMed:17210706).</text>
</comment>
<gene>
    <name evidence="15" type="primary">Abcc4</name>
    <name evidence="10" type="synonym">Mrp4</name>
</gene>